<organism>
    <name type="scientific">Variola virus</name>
    <dbReference type="NCBI Taxonomy" id="10255"/>
    <lineage>
        <taxon>Viruses</taxon>
        <taxon>Varidnaviria</taxon>
        <taxon>Bamfordvirae</taxon>
        <taxon>Nucleocytoviricota</taxon>
        <taxon>Pokkesviricetes</taxon>
        <taxon>Chitovirales</taxon>
        <taxon>Poxviridae</taxon>
        <taxon>Chordopoxvirinae</taxon>
        <taxon>Orthopoxvirus</taxon>
    </lineage>
</organism>
<keyword id="KW-0067">ATP-binding</keyword>
<keyword id="KW-0131">Cell cycle</keyword>
<keyword id="KW-0132">Cell division</keyword>
<keyword id="KW-0227">DNA damage</keyword>
<keyword id="KW-0233">DNA recombination</keyword>
<keyword id="KW-0234">DNA repair</keyword>
<keyword id="KW-0235">DNA replication</keyword>
<keyword id="KW-0244">Early protein</keyword>
<keyword id="KW-1035">Host cytoplasm</keyword>
<keyword id="KW-0436">Ligase</keyword>
<keyword id="KW-0460">Magnesium</keyword>
<keyword id="KW-0479">Metal-binding</keyword>
<keyword id="KW-0547">Nucleotide-binding</keyword>
<evidence type="ECO:0000250" key="1">
    <source>
        <dbReference type="UniProtKB" id="P16272"/>
    </source>
</evidence>
<evidence type="ECO:0000250" key="2">
    <source>
        <dbReference type="UniProtKB" id="P18858"/>
    </source>
</evidence>
<evidence type="ECO:0000255" key="3">
    <source>
        <dbReference type="PROSITE-ProRule" id="PRU10135"/>
    </source>
</evidence>
<evidence type="ECO:0000305" key="4"/>
<organismHost>
    <name type="scientific">Homo sapiens</name>
    <name type="common">Human</name>
    <dbReference type="NCBI Taxonomy" id="9606"/>
</organismHost>
<sequence>MTSLREFRKLCCAIYHASGYKEKSKLIRDFITDRDDKYLIIKLLLPGLDDRIYNMNDKQIIKIYSIIFKQSQKDMLQDLGYGYIGDTISTFFKENTEIRPRNKSILTLEDVDSFLTTLSSITKESHQIKLLTDIASVCTCNDLKCVVMLIDKDLKIKAGPRYVLNAISPHAYDVFRKSNNLKEIIENESKQNLDSISVSVMTPINPMLAESCDSVNKAFKKFPSGMFAEVKYDGERVQVHKNNNEFAFFSRNMKPVLSYKVDYLKEYIPKAFKKATSIVLDSEIVLVDEHNVQLPFGSLGIHKKKEYKNSNMCLFVFDCLYFDGFDMTDIPLYKRRSFLKDVMVEIPNRIVFSELTNISNESQLTDVLDDALTRKLEGLVLKDINGVYEPGKRRWLKIKRDYLNEGSMADSADLVVLGAYYGKGAKGGIMAVFLMGCYDDESGKWKTVTKCSGHDDNTLRVLQDQLTMVKINKDPKKIPEWLVVNKIYIPDFVVEDPKQSQIWEISGAEFTSSKSHTANGISIRFPRFTRIREDKTWKESTHLNDLVNLTKS</sequence>
<proteinExistence type="evidence at transcript level"/>
<name>DNLI_VARV</name>
<comment type="function">
    <text evidence="1">DNA ligase that seals nicks in double-stranded DNA during DNA replication, DNA recombination and DNA repair. Recruits cellular topoisomerase II to sites of viral replication and assembly.</text>
</comment>
<comment type="catalytic activity">
    <reaction evidence="3">
        <text>ATP + (deoxyribonucleotide)n-3'-hydroxyl + 5'-phospho-(deoxyribonucleotide)m = (deoxyribonucleotide)n+m + AMP + diphosphate.</text>
        <dbReference type="EC" id="6.5.1.1"/>
    </reaction>
</comment>
<comment type="cofactor">
    <cofactor evidence="2">
        <name>Mg(2+)</name>
        <dbReference type="ChEBI" id="CHEBI:18420"/>
    </cofactor>
</comment>
<comment type="subunit">
    <text evidence="1">Interacts with host TOP2A and TOP2B.</text>
</comment>
<comment type="subcellular location">
    <subcellularLocation>
        <location evidence="1">Host cytoplasm</location>
    </subcellularLocation>
    <text evidence="1">Found in sites viral of replication and assembly.</text>
</comment>
<comment type="induction">
    <text>Expressed in the early phase of the viral replicative cycle.</text>
</comment>
<comment type="similarity">
    <text evidence="4">Belongs to the ATP-dependent DNA ligase family.</text>
</comment>
<dbReference type="EC" id="6.5.1.1" evidence="3"/>
<dbReference type="EMBL" id="L22579">
    <property type="protein sequence ID" value="AAA60905.1"/>
    <property type="molecule type" value="Genomic_DNA"/>
</dbReference>
<dbReference type="PIR" id="T28595">
    <property type="entry name" value="T28595"/>
</dbReference>
<dbReference type="RefSeq" id="NP_042206.1">
    <property type="nucleotide sequence ID" value="NC_001611.1"/>
</dbReference>
<dbReference type="SMR" id="P0DOO4"/>
<dbReference type="GeneID" id="1486450"/>
<dbReference type="KEGG" id="vg:1486450"/>
<dbReference type="Proteomes" id="UP000119805">
    <property type="component" value="Segment"/>
</dbReference>
<dbReference type="GO" id="GO:0030430">
    <property type="term" value="C:host cell cytoplasm"/>
    <property type="evidence" value="ECO:0007669"/>
    <property type="project" value="UniProtKB-SubCell"/>
</dbReference>
<dbReference type="GO" id="GO:0005524">
    <property type="term" value="F:ATP binding"/>
    <property type="evidence" value="ECO:0007669"/>
    <property type="project" value="UniProtKB-KW"/>
</dbReference>
<dbReference type="GO" id="GO:0003677">
    <property type="term" value="F:DNA binding"/>
    <property type="evidence" value="ECO:0007669"/>
    <property type="project" value="InterPro"/>
</dbReference>
<dbReference type="GO" id="GO:0003910">
    <property type="term" value="F:DNA ligase (ATP) activity"/>
    <property type="evidence" value="ECO:0007669"/>
    <property type="project" value="UniProtKB-EC"/>
</dbReference>
<dbReference type="GO" id="GO:0046872">
    <property type="term" value="F:metal ion binding"/>
    <property type="evidence" value="ECO:0007669"/>
    <property type="project" value="UniProtKB-KW"/>
</dbReference>
<dbReference type="GO" id="GO:0051301">
    <property type="term" value="P:cell division"/>
    <property type="evidence" value="ECO:0007669"/>
    <property type="project" value="UniProtKB-KW"/>
</dbReference>
<dbReference type="GO" id="GO:0071897">
    <property type="term" value="P:DNA biosynthetic process"/>
    <property type="evidence" value="ECO:0007669"/>
    <property type="project" value="InterPro"/>
</dbReference>
<dbReference type="GO" id="GO:0006310">
    <property type="term" value="P:DNA recombination"/>
    <property type="evidence" value="ECO:0007669"/>
    <property type="project" value="UniProtKB-KW"/>
</dbReference>
<dbReference type="GO" id="GO:0006302">
    <property type="term" value="P:double-strand break repair"/>
    <property type="evidence" value="ECO:0007669"/>
    <property type="project" value="TreeGrafter"/>
</dbReference>
<dbReference type="GO" id="GO:0006273">
    <property type="term" value="P:lagging strand elongation"/>
    <property type="evidence" value="ECO:0007669"/>
    <property type="project" value="TreeGrafter"/>
</dbReference>
<dbReference type="CDD" id="cd07967">
    <property type="entry name" value="OBF_DNA_ligase_III"/>
    <property type="match status" value="1"/>
</dbReference>
<dbReference type="FunFam" id="2.40.50.140:FF:000085">
    <property type="entry name" value="DNA ligase"/>
    <property type="match status" value="1"/>
</dbReference>
<dbReference type="FunFam" id="3.30.470.30:FF:000003">
    <property type="entry name" value="DNA ligase"/>
    <property type="match status" value="1"/>
</dbReference>
<dbReference type="Gene3D" id="3.30.1490.70">
    <property type="match status" value="1"/>
</dbReference>
<dbReference type="Gene3D" id="1.10.3260.10">
    <property type="entry name" value="DNA ligase, ATP-dependent, N-terminal domain"/>
    <property type="match status" value="1"/>
</dbReference>
<dbReference type="Gene3D" id="3.30.470.30">
    <property type="entry name" value="DNA ligase/mRNA capping enzyme"/>
    <property type="match status" value="1"/>
</dbReference>
<dbReference type="Gene3D" id="2.40.50.140">
    <property type="entry name" value="Nucleic acid-binding proteins"/>
    <property type="match status" value="1"/>
</dbReference>
<dbReference type="InterPro" id="IPR050191">
    <property type="entry name" value="ATP-dep_DNA_ligase"/>
</dbReference>
<dbReference type="InterPro" id="IPR000977">
    <property type="entry name" value="DNA_ligase_ATP-dep"/>
</dbReference>
<dbReference type="InterPro" id="IPR012309">
    <property type="entry name" value="DNA_ligase_ATP-dep_C"/>
</dbReference>
<dbReference type="InterPro" id="IPR012310">
    <property type="entry name" value="DNA_ligase_ATP-dep_cent"/>
</dbReference>
<dbReference type="InterPro" id="IPR016059">
    <property type="entry name" value="DNA_ligase_ATP-dep_CS"/>
</dbReference>
<dbReference type="InterPro" id="IPR012308">
    <property type="entry name" value="DNA_ligase_ATP-dep_N"/>
</dbReference>
<dbReference type="InterPro" id="IPR036599">
    <property type="entry name" value="DNA_ligase_N_sf"/>
</dbReference>
<dbReference type="InterPro" id="IPR012340">
    <property type="entry name" value="NA-bd_OB-fold"/>
</dbReference>
<dbReference type="NCBIfam" id="TIGR00574">
    <property type="entry name" value="dnl1"/>
    <property type="match status" value="1"/>
</dbReference>
<dbReference type="PANTHER" id="PTHR45674">
    <property type="entry name" value="DNA LIGASE 1/3 FAMILY MEMBER"/>
    <property type="match status" value="1"/>
</dbReference>
<dbReference type="PANTHER" id="PTHR45674:SF9">
    <property type="entry name" value="DNA LIGASE 3"/>
    <property type="match status" value="1"/>
</dbReference>
<dbReference type="Pfam" id="PF04679">
    <property type="entry name" value="DNA_ligase_A_C"/>
    <property type="match status" value="1"/>
</dbReference>
<dbReference type="Pfam" id="PF01068">
    <property type="entry name" value="DNA_ligase_A_M"/>
    <property type="match status" value="1"/>
</dbReference>
<dbReference type="Pfam" id="PF04675">
    <property type="entry name" value="DNA_ligase_A_N"/>
    <property type="match status" value="1"/>
</dbReference>
<dbReference type="SUPFAM" id="SSF117018">
    <property type="entry name" value="ATP-dependent DNA ligase DNA-binding domain"/>
    <property type="match status" value="1"/>
</dbReference>
<dbReference type="SUPFAM" id="SSF56091">
    <property type="entry name" value="DNA ligase/mRNA capping enzyme, catalytic domain"/>
    <property type="match status" value="1"/>
</dbReference>
<dbReference type="SUPFAM" id="SSF50249">
    <property type="entry name" value="Nucleic acid-binding proteins"/>
    <property type="match status" value="1"/>
</dbReference>
<dbReference type="PROSITE" id="PS00697">
    <property type="entry name" value="DNA_LIGASE_A1"/>
    <property type="match status" value="1"/>
</dbReference>
<dbReference type="PROSITE" id="PS00333">
    <property type="entry name" value="DNA_LIGASE_A2"/>
    <property type="match status" value="1"/>
</dbReference>
<dbReference type="PROSITE" id="PS50160">
    <property type="entry name" value="DNA_LIGASE_A3"/>
    <property type="match status" value="1"/>
</dbReference>
<gene>
    <name type="primary">OPG180</name>
    <name type="synonym">LIG</name>
    <name type="ORF">A50R</name>
    <name type="ORF">J4R</name>
</gene>
<accession>P0DOO4</accession>
<accession>P33798</accession>
<accession>Q90028</accession>
<protein>
    <recommendedName>
        <fullName>DNA ligase</fullName>
        <ecNumber evidence="3">6.5.1.1</ecNumber>
    </recommendedName>
    <alternativeName>
        <fullName>Polydeoxyribonucleotide synthase [ATP]</fullName>
    </alternativeName>
</protein>
<reference key="1">
    <citation type="journal article" date="1992" name="J. Gen. Virol.">
        <title>Nucleotide sequence of 21.8 kbp of variola major virus strain Harvey and comparison with vaccinia virus.</title>
        <authorList>
            <person name="Aguado B."/>
            <person name="Selmes I.P."/>
            <person name="Smith G.L."/>
        </authorList>
    </citation>
    <scope>NUCLEOTIDE SEQUENCE [GENOMIC DNA]</scope>
    <source>
        <strain>Harvey</strain>
    </source>
</reference>
<reference key="2">
    <citation type="journal article" date="1993" name="Nature">
        <title>Potential virulence determinants in terminal regions of variola smallpox virus genome.</title>
        <authorList>
            <person name="Massung R.F."/>
            <person name="Esposito J.J."/>
            <person name="Liu L.I."/>
            <person name="Qi J."/>
            <person name="Utterback T.R."/>
            <person name="Knight J.C."/>
            <person name="Aubin L."/>
            <person name="Yuran T.E."/>
            <person name="Parsons J.M."/>
            <person name="Loparev V.N."/>
            <person name="Selivanov N.A."/>
            <person name="Cavallaro K.F."/>
            <person name="Kerlavage A.R."/>
            <person name="Mahy B.W.J."/>
            <person name="Venter J.C."/>
        </authorList>
    </citation>
    <scope>NUCLEOTIDE SEQUENCE [GENOMIC DNA]</scope>
    <source>
        <strain>Bangladesh-1975</strain>
    </source>
</reference>
<feature type="chain" id="PRO_0000448102" description="DNA ligase">
    <location>
        <begin position="1"/>
        <end position="552"/>
    </location>
</feature>
<feature type="active site" description="N6-AMP-lysine intermediate" evidence="3">
    <location>
        <position position="231"/>
    </location>
</feature>
<feature type="binding site" evidence="2">
    <location>
        <position position="229"/>
    </location>
    <ligand>
        <name>ATP</name>
        <dbReference type="ChEBI" id="CHEBI:30616"/>
    </ligand>
</feature>
<feature type="binding site" evidence="2">
    <location>
        <position position="236"/>
    </location>
    <ligand>
        <name>ATP</name>
        <dbReference type="ChEBI" id="CHEBI:30616"/>
    </ligand>
</feature>
<feature type="binding site" evidence="2">
    <location>
        <position position="283"/>
    </location>
    <ligand>
        <name>ATP</name>
        <dbReference type="ChEBI" id="CHEBI:30616"/>
    </ligand>
</feature>
<feature type="binding site" evidence="2">
    <location>
        <position position="283"/>
    </location>
    <ligand>
        <name>Mg(2+)</name>
        <dbReference type="ChEBI" id="CHEBI:18420"/>
        <label>1</label>
    </ligand>
</feature>
<feature type="binding site" evidence="2">
    <location>
        <position position="377"/>
    </location>
    <ligand>
        <name>Mg(2+)</name>
        <dbReference type="ChEBI" id="CHEBI:18420"/>
        <label>2</label>
    </ligand>
</feature>
<feature type="binding site" evidence="2">
    <location>
        <position position="382"/>
    </location>
    <ligand>
        <name>ATP</name>
        <dbReference type="ChEBI" id="CHEBI:30616"/>
    </ligand>
</feature>
<feature type="binding site" evidence="2">
    <location>
        <position position="397"/>
    </location>
    <ligand>
        <name>ATP</name>
        <dbReference type="ChEBI" id="CHEBI:30616"/>
    </ligand>
</feature>
<feature type="sequence variant" description="In strain: Bangladesh-1975.">
    <original>D</original>
    <variation>N</variation>
    <location>
        <position position="194"/>
    </location>
</feature>